<organism>
    <name type="scientific">Chara vulgaris</name>
    <name type="common">Common stonewort</name>
    <dbReference type="NCBI Taxonomy" id="55564"/>
    <lineage>
        <taxon>Eukaryota</taxon>
        <taxon>Viridiplantae</taxon>
        <taxon>Streptophyta</taxon>
        <taxon>Charophyceae</taxon>
        <taxon>Charales</taxon>
        <taxon>Characeae</taxon>
        <taxon>Chara</taxon>
    </lineage>
</organism>
<evidence type="ECO:0000255" key="1">
    <source>
        <dbReference type="HAMAP-Rule" id="MF_01323"/>
    </source>
</evidence>
<sequence>MIHQKGYQFLQIGLASPKQIRKWAERILPNGDVVGEVKEPHTLHYRNQKPEKDGLFCEKIFGPIKSGRCACGKYERIPEQGEGKKFCKKCWVEFTYSRVRRYRMGYISLGCPVAHVWYLKSTPSHIANLLGQKLKDIESLAYYNHCLGNPSTNYPTLLFIKKYFQYSSLAWLLHILLCFFSFKGFEALEDREIATGGDAIKRLLSELDLQNTIDESRKACEELAYFDPLDEKEAQKAQREKERLVRRIKIASYFQETKIKPQWMVLSTIPVLPPDLRPMIHLNDGPLATSDLNDLYRKVLYRNKTLWELRQGIWPAPHSLMISQKRLVQEAVDALIDNGLGGPPMRDSNNRPYKSLSDVISGKQGRFRQNLLGKRVDYSGRSVIVVGPHLKIYQCGLPKNMAIELFQPFLIHYMINKKLASNLRVAKSIIQSKHPIVWFILKEVIKKHPVLLNRAPTLHRLGIQAFQPILVEGKAILLHPLVCAGFNADFDGDQMAVHVPLSPESQKEARLIMISNRNLLSPATGDPITLPSQDMLLGLYMLTLEDLQRNFSFSQKQCLKKHTNFNQMPSFISFEDVIKARVERKIHLYTSLWLKLKNIEAITSYLYQSPIEIQYNSRGTRSITYEDWNICENIEGEKISIYAYTTVGRVIFNQQFRSALQKRIDY</sequence>
<name>RPOC1_CHAVU</name>
<accession>Q1ACN5</accession>
<reference key="1">
    <citation type="journal article" date="2006" name="Mol. Biol. Evol.">
        <title>The chloroplast genome sequence of Chara vulgaris sheds new light into the closest green algal relatives of land plants.</title>
        <authorList>
            <person name="Turmel M."/>
            <person name="Otis C."/>
            <person name="Lemieux C."/>
        </authorList>
    </citation>
    <scope>NUCLEOTIDE SEQUENCE [LARGE SCALE GENOMIC DNA]</scope>
</reference>
<gene>
    <name evidence="1" type="primary">rpoC1</name>
</gene>
<dbReference type="EC" id="2.7.7.6" evidence="1"/>
<dbReference type="EMBL" id="DQ229107">
    <property type="protein sequence ID" value="ABA61979.1"/>
    <property type="molecule type" value="Genomic_DNA"/>
</dbReference>
<dbReference type="RefSeq" id="YP_635712.1">
    <property type="nucleotide sequence ID" value="NC_008097.1"/>
</dbReference>
<dbReference type="SMR" id="Q1ACN5"/>
<dbReference type="GeneID" id="4100202"/>
<dbReference type="GO" id="GO:0009507">
    <property type="term" value="C:chloroplast"/>
    <property type="evidence" value="ECO:0007669"/>
    <property type="project" value="UniProtKB-SubCell"/>
</dbReference>
<dbReference type="GO" id="GO:0000428">
    <property type="term" value="C:DNA-directed RNA polymerase complex"/>
    <property type="evidence" value="ECO:0007669"/>
    <property type="project" value="UniProtKB-KW"/>
</dbReference>
<dbReference type="GO" id="GO:0005739">
    <property type="term" value="C:mitochondrion"/>
    <property type="evidence" value="ECO:0007669"/>
    <property type="project" value="GOC"/>
</dbReference>
<dbReference type="GO" id="GO:0003677">
    <property type="term" value="F:DNA binding"/>
    <property type="evidence" value="ECO:0007669"/>
    <property type="project" value="UniProtKB-UniRule"/>
</dbReference>
<dbReference type="GO" id="GO:0003899">
    <property type="term" value="F:DNA-directed RNA polymerase activity"/>
    <property type="evidence" value="ECO:0007669"/>
    <property type="project" value="UniProtKB-UniRule"/>
</dbReference>
<dbReference type="GO" id="GO:0000287">
    <property type="term" value="F:magnesium ion binding"/>
    <property type="evidence" value="ECO:0007669"/>
    <property type="project" value="UniProtKB-UniRule"/>
</dbReference>
<dbReference type="GO" id="GO:0008270">
    <property type="term" value="F:zinc ion binding"/>
    <property type="evidence" value="ECO:0007669"/>
    <property type="project" value="UniProtKB-UniRule"/>
</dbReference>
<dbReference type="GO" id="GO:0006351">
    <property type="term" value="P:DNA-templated transcription"/>
    <property type="evidence" value="ECO:0007669"/>
    <property type="project" value="UniProtKB-UniRule"/>
</dbReference>
<dbReference type="Gene3D" id="1.10.40.90">
    <property type="match status" value="1"/>
</dbReference>
<dbReference type="Gene3D" id="2.40.40.20">
    <property type="match status" value="1"/>
</dbReference>
<dbReference type="Gene3D" id="4.10.860.120">
    <property type="entry name" value="RNA polymerase II, clamp domain"/>
    <property type="match status" value="1"/>
</dbReference>
<dbReference type="Gene3D" id="1.10.274.100">
    <property type="entry name" value="RNA polymerase Rpb1, domain 3"/>
    <property type="match status" value="1"/>
</dbReference>
<dbReference type="HAMAP" id="MF_01323">
    <property type="entry name" value="RNApol_bact_RpoC1"/>
    <property type="match status" value="1"/>
</dbReference>
<dbReference type="InterPro" id="IPR045867">
    <property type="entry name" value="DNA-dir_RpoC_beta_prime"/>
</dbReference>
<dbReference type="InterPro" id="IPR000722">
    <property type="entry name" value="RNA_pol_asu"/>
</dbReference>
<dbReference type="InterPro" id="IPR006592">
    <property type="entry name" value="RNA_pol_N"/>
</dbReference>
<dbReference type="InterPro" id="IPR007080">
    <property type="entry name" value="RNA_pol_Rpb1_1"/>
</dbReference>
<dbReference type="InterPro" id="IPR007066">
    <property type="entry name" value="RNA_pol_Rpb1_3"/>
</dbReference>
<dbReference type="InterPro" id="IPR042102">
    <property type="entry name" value="RNA_pol_Rpb1_3_sf"/>
</dbReference>
<dbReference type="InterPro" id="IPR044893">
    <property type="entry name" value="RNA_pol_Rpb1_clamp_domain"/>
</dbReference>
<dbReference type="InterPro" id="IPR034678">
    <property type="entry name" value="RNApol_RpoC1"/>
</dbReference>
<dbReference type="PANTHER" id="PTHR19376">
    <property type="entry name" value="DNA-DIRECTED RNA POLYMERASE"/>
    <property type="match status" value="1"/>
</dbReference>
<dbReference type="PANTHER" id="PTHR19376:SF54">
    <property type="entry name" value="DNA-DIRECTED RNA POLYMERASE SUBUNIT BETA"/>
    <property type="match status" value="1"/>
</dbReference>
<dbReference type="Pfam" id="PF04997">
    <property type="entry name" value="RNA_pol_Rpb1_1"/>
    <property type="match status" value="1"/>
</dbReference>
<dbReference type="Pfam" id="PF00623">
    <property type="entry name" value="RNA_pol_Rpb1_2"/>
    <property type="match status" value="2"/>
</dbReference>
<dbReference type="Pfam" id="PF04983">
    <property type="entry name" value="RNA_pol_Rpb1_3"/>
    <property type="match status" value="1"/>
</dbReference>
<dbReference type="SMART" id="SM00663">
    <property type="entry name" value="RPOLA_N"/>
    <property type="match status" value="1"/>
</dbReference>
<dbReference type="SUPFAM" id="SSF64484">
    <property type="entry name" value="beta and beta-prime subunits of DNA dependent RNA-polymerase"/>
    <property type="match status" value="1"/>
</dbReference>
<protein>
    <recommendedName>
        <fullName evidence="1">DNA-directed RNA polymerase subunit beta'</fullName>
        <ecNumber evidence="1">2.7.7.6</ecNumber>
    </recommendedName>
    <alternativeName>
        <fullName evidence="1">PEP</fullName>
    </alternativeName>
    <alternativeName>
        <fullName evidence="1">Plastid-encoded RNA polymerase subunit beta'</fullName>
        <shortName evidence="1">RNA polymerase subunit beta'</shortName>
    </alternativeName>
</protein>
<feature type="chain" id="PRO_0000277162" description="DNA-directed RNA polymerase subunit beta'">
    <location>
        <begin position="1"/>
        <end position="666"/>
    </location>
</feature>
<feature type="binding site" evidence="1">
    <location>
        <position position="69"/>
    </location>
    <ligand>
        <name>Zn(2+)</name>
        <dbReference type="ChEBI" id="CHEBI:29105"/>
    </ligand>
</feature>
<feature type="binding site" evidence="1">
    <location>
        <position position="71"/>
    </location>
    <ligand>
        <name>Zn(2+)</name>
        <dbReference type="ChEBI" id="CHEBI:29105"/>
    </ligand>
</feature>
<feature type="binding site" evidence="1">
    <location>
        <position position="87"/>
    </location>
    <ligand>
        <name>Zn(2+)</name>
        <dbReference type="ChEBI" id="CHEBI:29105"/>
    </ligand>
</feature>
<feature type="binding site" evidence="1">
    <location>
        <position position="90"/>
    </location>
    <ligand>
        <name>Zn(2+)</name>
        <dbReference type="ChEBI" id="CHEBI:29105"/>
    </ligand>
</feature>
<feature type="binding site" evidence="1">
    <location>
        <position position="489"/>
    </location>
    <ligand>
        <name>Mg(2+)</name>
        <dbReference type="ChEBI" id="CHEBI:18420"/>
    </ligand>
</feature>
<feature type="binding site" evidence="1">
    <location>
        <position position="491"/>
    </location>
    <ligand>
        <name>Mg(2+)</name>
        <dbReference type="ChEBI" id="CHEBI:18420"/>
    </ligand>
</feature>
<feature type="binding site" evidence="1">
    <location>
        <position position="493"/>
    </location>
    <ligand>
        <name>Mg(2+)</name>
        <dbReference type="ChEBI" id="CHEBI:18420"/>
    </ligand>
</feature>
<geneLocation type="chloroplast"/>
<keyword id="KW-0150">Chloroplast</keyword>
<keyword id="KW-0240">DNA-directed RNA polymerase</keyword>
<keyword id="KW-0460">Magnesium</keyword>
<keyword id="KW-0479">Metal-binding</keyword>
<keyword id="KW-0548">Nucleotidyltransferase</keyword>
<keyword id="KW-0934">Plastid</keyword>
<keyword id="KW-0804">Transcription</keyword>
<keyword id="KW-0808">Transferase</keyword>
<keyword id="KW-0862">Zinc</keyword>
<proteinExistence type="inferred from homology"/>
<comment type="function">
    <text evidence="1">DNA-dependent RNA polymerase catalyzes the transcription of DNA into RNA using the four ribonucleoside triphosphates as substrates.</text>
</comment>
<comment type="catalytic activity">
    <reaction evidence="1">
        <text>RNA(n) + a ribonucleoside 5'-triphosphate = RNA(n+1) + diphosphate</text>
        <dbReference type="Rhea" id="RHEA:21248"/>
        <dbReference type="Rhea" id="RHEA-COMP:14527"/>
        <dbReference type="Rhea" id="RHEA-COMP:17342"/>
        <dbReference type="ChEBI" id="CHEBI:33019"/>
        <dbReference type="ChEBI" id="CHEBI:61557"/>
        <dbReference type="ChEBI" id="CHEBI:140395"/>
        <dbReference type="EC" id="2.7.7.6"/>
    </reaction>
</comment>
<comment type="cofactor">
    <cofactor evidence="1">
        <name>Mg(2+)</name>
        <dbReference type="ChEBI" id="CHEBI:18420"/>
    </cofactor>
    <text evidence="1">Binds 1 Mg(2+) ion per subunit.</text>
</comment>
<comment type="cofactor">
    <cofactor evidence="1">
        <name>Zn(2+)</name>
        <dbReference type="ChEBI" id="CHEBI:29105"/>
    </cofactor>
    <text evidence="1">Binds 1 Zn(2+) ion per subunit.</text>
</comment>
<comment type="subunit">
    <text evidence="1">In plastids the minimal PEP RNA polymerase catalytic core is composed of four subunits: alpha, beta, beta', and beta''. When a (nuclear-encoded) sigma factor is associated with the core the holoenzyme is formed, which can initiate transcription.</text>
</comment>
<comment type="subcellular location">
    <subcellularLocation>
        <location evidence="1">Plastid</location>
        <location evidence="1">Chloroplast</location>
    </subcellularLocation>
</comment>
<comment type="similarity">
    <text evidence="1">Belongs to the RNA polymerase beta' chain family. RpoC1 subfamily.</text>
</comment>